<name>GLPK_FRATT</name>
<protein>
    <recommendedName>
        <fullName evidence="1">Glycerol kinase</fullName>
        <ecNumber evidence="1">2.7.1.30</ecNumber>
    </recommendedName>
    <alternativeName>
        <fullName evidence="1">ATP:glycerol 3-phosphotransferase</fullName>
    </alternativeName>
    <alternativeName>
        <fullName evidence="1">Glycerokinase</fullName>
        <shortName evidence="1">GK</shortName>
    </alternativeName>
</protein>
<keyword id="KW-0067">ATP-binding</keyword>
<keyword id="KW-0319">Glycerol metabolism</keyword>
<keyword id="KW-0418">Kinase</keyword>
<keyword id="KW-0547">Nucleotide-binding</keyword>
<keyword id="KW-1185">Reference proteome</keyword>
<keyword id="KW-0808">Transferase</keyword>
<sequence length="502" mass="55717">MSKDFILAVDQGTTSSRAIIFDKKGNIRKIAQKEFTQIYPKSGWVEHDAMEIWGTQSGVMREALEFGRVKPDQIAAIGITNQRETVVVWDKETGDPVYNAIVWQCRRTSSICDEIKRDPQFVKYIKENTGLVVDAYFSGTKVKWILDNVEGAREKANAGKLLMGTIDTWLIWNLTRGKVHATDYSNASRTMLFNINSLEWDKKILDYLNIPESMLPEVKNSSEVFGVTDSHTLGGAEIPIAGVAGDQHAALFGHCCFEKGMAKNTYGTGCFALMNVGDKPVYSDEGLLTTIAWAENGKPTYALEGSVFIAGAVIQWIRDGLGLVRSAEDSEYYATKIDSTNGVYLVPAFVGLGTPYWDMYARGTIVGITRDTKREHIIRAALEAIAYQAKDVLECMKEDTGLDLAGLRVDGGAVQNNFLMQFQSDILQSEISKPKVNEITGLGAVFLAGLAVGFWKDKQELKSILTTEKVFEPQKDSQAVAHDYRGWKKAVERSKAWAECYS</sequence>
<organism>
    <name type="scientific">Francisella tularensis subsp. tularensis (strain SCHU S4 / Schu 4)</name>
    <dbReference type="NCBI Taxonomy" id="177416"/>
    <lineage>
        <taxon>Bacteria</taxon>
        <taxon>Pseudomonadati</taxon>
        <taxon>Pseudomonadota</taxon>
        <taxon>Gammaproteobacteria</taxon>
        <taxon>Thiotrichales</taxon>
        <taxon>Francisellaceae</taxon>
        <taxon>Francisella</taxon>
    </lineage>
</organism>
<evidence type="ECO:0000255" key="1">
    <source>
        <dbReference type="HAMAP-Rule" id="MF_00186"/>
    </source>
</evidence>
<gene>
    <name evidence="1" type="primary">glpK</name>
    <name type="ordered locus">FTT_0130</name>
</gene>
<feature type="chain" id="PRO_1000058452" description="Glycerol kinase">
    <location>
        <begin position="1"/>
        <end position="502"/>
    </location>
</feature>
<feature type="binding site" evidence="1">
    <location>
        <position position="13"/>
    </location>
    <ligand>
        <name>ADP</name>
        <dbReference type="ChEBI" id="CHEBI:456216"/>
    </ligand>
</feature>
<feature type="binding site" evidence="1">
    <location>
        <position position="13"/>
    </location>
    <ligand>
        <name>ATP</name>
        <dbReference type="ChEBI" id="CHEBI:30616"/>
    </ligand>
</feature>
<feature type="binding site" evidence="1">
    <location>
        <position position="13"/>
    </location>
    <ligand>
        <name>sn-glycerol 3-phosphate</name>
        <dbReference type="ChEBI" id="CHEBI:57597"/>
    </ligand>
</feature>
<feature type="binding site" evidence="1">
    <location>
        <position position="14"/>
    </location>
    <ligand>
        <name>ATP</name>
        <dbReference type="ChEBI" id="CHEBI:30616"/>
    </ligand>
</feature>
<feature type="binding site" evidence="1">
    <location>
        <position position="15"/>
    </location>
    <ligand>
        <name>ATP</name>
        <dbReference type="ChEBI" id="CHEBI:30616"/>
    </ligand>
</feature>
<feature type="binding site" evidence="1">
    <location>
        <position position="17"/>
    </location>
    <ligand>
        <name>ADP</name>
        <dbReference type="ChEBI" id="CHEBI:456216"/>
    </ligand>
</feature>
<feature type="binding site" evidence="1">
    <location>
        <position position="83"/>
    </location>
    <ligand>
        <name>glycerol</name>
        <dbReference type="ChEBI" id="CHEBI:17754"/>
    </ligand>
</feature>
<feature type="binding site" evidence="1">
    <location>
        <position position="83"/>
    </location>
    <ligand>
        <name>sn-glycerol 3-phosphate</name>
        <dbReference type="ChEBI" id="CHEBI:57597"/>
    </ligand>
</feature>
<feature type="binding site" evidence="1">
    <location>
        <position position="84"/>
    </location>
    <ligand>
        <name>glycerol</name>
        <dbReference type="ChEBI" id="CHEBI:17754"/>
    </ligand>
</feature>
<feature type="binding site" evidence="1">
    <location>
        <position position="84"/>
    </location>
    <ligand>
        <name>sn-glycerol 3-phosphate</name>
        <dbReference type="ChEBI" id="CHEBI:57597"/>
    </ligand>
</feature>
<feature type="binding site" evidence="1">
    <location>
        <position position="136"/>
    </location>
    <ligand>
        <name>glycerol</name>
        <dbReference type="ChEBI" id="CHEBI:17754"/>
    </ligand>
</feature>
<feature type="binding site" evidence="1">
    <location>
        <position position="136"/>
    </location>
    <ligand>
        <name>sn-glycerol 3-phosphate</name>
        <dbReference type="ChEBI" id="CHEBI:57597"/>
    </ligand>
</feature>
<feature type="binding site" evidence="1">
    <location>
        <position position="246"/>
    </location>
    <ligand>
        <name>glycerol</name>
        <dbReference type="ChEBI" id="CHEBI:17754"/>
    </ligand>
</feature>
<feature type="binding site" evidence="1">
    <location>
        <position position="246"/>
    </location>
    <ligand>
        <name>sn-glycerol 3-phosphate</name>
        <dbReference type="ChEBI" id="CHEBI:57597"/>
    </ligand>
</feature>
<feature type="binding site" evidence="1">
    <location>
        <position position="247"/>
    </location>
    <ligand>
        <name>glycerol</name>
        <dbReference type="ChEBI" id="CHEBI:17754"/>
    </ligand>
</feature>
<feature type="binding site" evidence="1">
    <location>
        <position position="268"/>
    </location>
    <ligand>
        <name>ADP</name>
        <dbReference type="ChEBI" id="CHEBI:456216"/>
    </ligand>
</feature>
<feature type="binding site" evidence="1">
    <location>
        <position position="268"/>
    </location>
    <ligand>
        <name>ATP</name>
        <dbReference type="ChEBI" id="CHEBI:30616"/>
    </ligand>
</feature>
<feature type="binding site" evidence="1">
    <location>
        <position position="311"/>
    </location>
    <ligand>
        <name>ADP</name>
        <dbReference type="ChEBI" id="CHEBI:456216"/>
    </ligand>
</feature>
<feature type="binding site" evidence="1">
    <location>
        <position position="311"/>
    </location>
    <ligand>
        <name>ATP</name>
        <dbReference type="ChEBI" id="CHEBI:30616"/>
    </ligand>
</feature>
<feature type="binding site" evidence="1">
    <location>
        <position position="315"/>
    </location>
    <ligand>
        <name>ATP</name>
        <dbReference type="ChEBI" id="CHEBI:30616"/>
    </ligand>
</feature>
<feature type="binding site" evidence="1">
    <location>
        <position position="412"/>
    </location>
    <ligand>
        <name>ADP</name>
        <dbReference type="ChEBI" id="CHEBI:456216"/>
    </ligand>
</feature>
<feature type="binding site" evidence="1">
    <location>
        <position position="412"/>
    </location>
    <ligand>
        <name>ATP</name>
        <dbReference type="ChEBI" id="CHEBI:30616"/>
    </ligand>
</feature>
<feature type="binding site" evidence="1">
    <location>
        <position position="416"/>
    </location>
    <ligand>
        <name>ADP</name>
        <dbReference type="ChEBI" id="CHEBI:456216"/>
    </ligand>
</feature>
<comment type="function">
    <text evidence="1">Key enzyme in the regulation of glycerol uptake and metabolism. Catalyzes the phosphorylation of glycerol to yield sn-glycerol 3-phosphate.</text>
</comment>
<comment type="catalytic activity">
    <reaction evidence="1">
        <text>glycerol + ATP = sn-glycerol 3-phosphate + ADP + H(+)</text>
        <dbReference type="Rhea" id="RHEA:21644"/>
        <dbReference type="ChEBI" id="CHEBI:15378"/>
        <dbReference type="ChEBI" id="CHEBI:17754"/>
        <dbReference type="ChEBI" id="CHEBI:30616"/>
        <dbReference type="ChEBI" id="CHEBI:57597"/>
        <dbReference type="ChEBI" id="CHEBI:456216"/>
        <dbReference type="EC" id="2.7.1.30"/>
    </reaction>
</comment>
<comment type="activity regulation">
    <text evidence="1">Inhibited by fructose 1,6-bisphosphate (FBP).</text>
</comment>
<comment type="pathway">
    <text evidence="1">Polyol metabolism; glycerol degradation via glycerol kinase pathway; sn-glycerol 3-phosphate from glycerol: step 1/1.</text>
</comment>
<comment type="similarity">
    <text evidence="1">Belongs to the FGGY kinase family.</text>
</comment>
<accession>Q5NIE5</accession>
<dbReference type="EC" id="2.7.1.30" evidence="1"/>
<dbReference type="EMBL" id="AJ749949">
    <property type="protein sequence ID" value="CAG44763.1"/>
    <property type="molecule type" value="Genomic_DNA"/>
</dbReference>
<dbReference type="RefSeq" id="WP_003019887.1">
    <property type="nucleotide sequence ID" value="NC_006570.2"/>
</dbReference>
<dbReference type="RefSeq" id="YP_169197.1">
    <property type="nucleotide sequence ID" value="NC_006570.2"/>
</dbReference>
<dbReference type="SMR" id="Q5NIE5"/>
<dbReference type="STRING" id="177416.FTT_0130"/>
<dbReference type="DNASU" id="3192359"/>
<dbReference type="EnsemblBacteria" id="CAG44763">
    <property type="protein sequence ID" value="CAG44763"/>
    <property type="gene ID" value="FTT_0130"/>
</dbReference>
<dbReference type="KEGG" id="ftu:FTT_0130"/>
<dbReference type="eggNOG" id="COG0554">
    <property type="taxonomic scope" value="Bacteria"/>
</dbReference>
<dbReference type="OrthoDB" id="9805576at2"/>
<dbReference type="UniPathway" id="UPA00618">
    <property type="reaction ID" value="UER00672"/>
</dbReference>
<dbReference type="Proteomes" id="UP000001174">
    <property type="component" value="Chromosome"/>
</dbReference>
<dbReference type="GO" id="GO:0005829">
    <property type="term" value="C:cytosol"/>
    <property type="evidence" value="ECO:0007669"/>
    <property type="project" value="TreeGrafter"/>
</dbReference>
<dbReference type="GO" id="GO:0005524">
    <property type="term" value="F:ATP binding"/>
    <property type="evidence" value="ECO:0007669"/>
    <property type="project" value="UniProtKB-UniRule"/>
</dbReference>
<dbReference type="GO" id="GO:0004370">
    <property type="term" value="F:glycerol kinase activity"/>
    <property type="evidence" value="ECO:0000250"/>
    <property type="project" value="UniProtKB"/>
</dbReference>
<dbReference type="GO" id="GO:0019563">
    <property type="term" value="P:glycerol catabolic process"/>
    <property type="evidence" value="ECO:0007669"/>
    <property type="project" value="UniProtKB-UniRule"/>
</dbReference>
<dbReference type="GO" id="GO:0006071">
    <property type="term" value="P:glycerol metabolic process"/>
    <property type="evidence" value="ECO:0000250"/>
    <property type="project" value="UniProtKB"/>
</dbReference>
<dbReference type="GO" id="GO:0006072">
    <property type="term" value="P:glycerol-3-phosphate metabolic process"/>
    <property type="evidence" value="ECO:0007669"/>
    <property type="project" value="InterPro"/>
</dbReference>
<dbReference type="CDD" id="cd07786">
    <property type="entry name" value="FGGY_EcGK_like"/>
    <property type="match status" value="1"/>
</dbReference>
<dbReference type="FunFam" id="3.30.420.40:FF:000007">
    <property type="entry name" value="Glycerol kinase"/>
    <property type="match status" value="1"/>
</dbReference>
<dbReference type="FunFam" id="3.30.420.40:FF:000008">
    <property type="entry name" value="Glycerol kinase"/>
    <property type="match status" value="1"/>
</dbReference>
<dbReference type="Gene3D" id="3.30.420.40">
    <property type="match status" value="2"/>
</dbReference>
<dbReference type="HAMAP" id="MF_00186">
    <property type="entry name" value="Glycerol_kin"/>
    <property type="match status" value="1"/>
</dbReference>
<dbReference type="InterPro" id="IPR043129">
    <property type="entry name" value="ATPase_NBD"/>
</dbReference>
<dbReference type="InterPro" id="IPR000577">
    <property type="entry name" value="Carb_kinase_FGGY"/>
</dbReference>
<dbReference type="InterPro" id="IPR018483">
    <property type="entry name" value="Carb_kinase_FGGY_CS"/>
</dbReference>
<dbReference type="InterPro" id="IPR018485">
    <property type="entry name" value="FGGY_C"/>
</dbReference>
<dbReference type="InterPro" id="IPR018484">
    <property type="entry name" value="FGGY_N"/>
</dbReference>
<dbReference type="InterPro" id="IPR005999">
    <property type="entry name" value="Glycerol_kin"/>
</dbReference>
<dbReference type="NCBIfam" id="TIGR01311">
    <property type="entry name" value="glycerol_kin"/>
    <property type="match status" value="1"/>
</dbReference>
<dbReference type="NCBIfam" id="NF000756">
    <property type="entry name" value="PRK00047.1"/>
    <property type="match status" value="1"/>
</dbReference>
<dbReference type="PANTHER" id="PTHR10196:SF69">
    <property type="entry name" value="GLYCEROL KINASE"/>
    <property type="match status" value="1"/>
</dbReference>
<dbReference type="PANTHER" id="PTHR10196">
    <property type="entry name" value="SUGAR KINASE"/>
    <property type="match status" value="1"/>
</dbReference>
<dbReference type="Pfam" id="PF02782">
    <property type="entry name" value="FGGY_C"/>
    <property type="match status" value="1"/>
</dbReference>
<dbReference type="Pfam" id="PF00370">
    <property type="entry name" value="FGGY_N"/>
    <property type="match status" value="1"/>
</dbReference>
<dbReference type="PIRSF" id="PIRSF000538">
    <property type="entry name" value="GlpK"/>
    <property type="match status" value="1"/>
</dbReference>
<dbReference type="SUPFAM" id="SSF53067">
    <property type="entry name" value="Actin-like ATPase domain"/>
    <property type="match status" value="2"/>
</dbReference>
<dbReference type="PROSITE" id="PS00933">
    <property type="entry name" value="FGGY_KINASES_1"/>
    <property type="match status" value="1"/>
</dbReference>
<dbReference type="PROSITE" id="PS00445">
    <property type="entry name" value="FGGY_KINASES_2"/>
    <property type="match status" value="1"/>
</dbReference>
<proteinExistence type="inferred from homology"/>
<reference key="1">
    <citation type="journal article" date="2005" name="Nat. Genet.">
        <title>The complete genome sequence of Francisella tularensis, the causative agent of tularemia.</title>
        <authorList>
            <person name="Larsson P."/>
            <person name="Oyston P.C.F."/>
            <person name="Chain P."/>
            <person name="Chu M.C."/>
            <person name="Duffield M."/>
            <person name="Fuxelius H.-H."/>
            <person name="Garcia E."/>
            <person name="Haelltorp G."/>
            <person name="Johansson D."/>
            <person name="Isherwood K.E."/>
            <person name="Karp P.D."/>
            <person name="Larsson E."/>
            <person name="Liu Y."/>
            <person name="Michell S."/>
            <person name="Prior J."/>
            <person name="Prior R."/>
            <person name="Malfatti S."/>
            <person name="Sjoestedt A."/>
            <person name="Svensson K."/>
            <person name="Thompson N."/>
            <person name="Vergez L."/>
            <person name="Wagg J.K."/>
            <person name="Wren B.W."/>
            <person name="Lindler L.E."/>
            <person name="Andersson S.G.E."/>
            <person name="Forsman M."/>
            <person name="Titball R.W."/>
        </authorList>
    </citation>
    <scope>NUCLEOTIDE SEQUENCE [LARGE SCALE GENOMIC DNA]</scope>
    <source>
        <strain>SCHU S4 / Schu 4</strain>
    </source>
</reference>